<accession>A7ML90</accession>
<sequence>MGVRAQQKERTRRSLVEAAFSQLSAERSFASLSLREVAREAGIAPTSFYRHFRDVDELGLTMVDESGLMLRQLMRQARQRIAKGGSVIRTSVSTFMEFIGNNPNAFRLLLRERSGTSAAFRAAVAREIQHFIAELADYLELENHMPRAFTEAQAEAMVTIVFSAGAEALDVSPEQRGQLEERLVLQLRMISKGAYYWYRREQEKMAQNSDK</sequence>
<proteinExistence type="inferred from homology"/>
<reference key="1">
    <citation type="journal article" date="2010" name="PLoS ONE">
        <title>Genome sequence of Cronobacter sakazakii BAA-894 and comparative genomic hybridization analysis with other Cronobacter species.</title>
        <authorList>
            <person name="Kucerova E."/>
            <person name="Clifton S.W."/>
            <person name="Xia X.Q."/>
            <person name="Long F."/>
            <person name="Porwollik S."/>
            <person name="Fulton L."/>
            <person name="Fronick C."/>
            <person name="Minx P."/>
            <person name="Kyung K."/>
            <person name="Warren W."/>
            <person name="Fulton R."/>
            <person name="Feng D."/>
            <person name="Wollam A."/>
            <person name="Shah N."/>
            <person name="Bhonagiri V."/>
            <person name="Nash W.E."/>
            <person name="Hallsworth-Pepin K."/>
            <person name="Wilson R.K."/>
            <person name="McClelland M."/>
            <person name="Forsythe S.J."/>
        </authorList>
    </citation>
    <scope>NUCLEOTIDE SEQUENCE [LARGE SCALE GENOMIC DNA]</scope>
    <source>
        <strain>ATCC BAA-894</strain>
    </source>
</reference>
<feature type="chain" id="PRO_1000065870" description="HTH-type transcriptional repressor FabR">
    <location>
        <begin position="1"/>
        <end position="211"/>
    </location>
</feature>
<feature type="domain" description="HTH tetR-type" evidence="1">
    <location>
        <begin position="10"/>
        <end position="70"/>
    </location>
</feature>
<feature type="DNA-binding region" description="H-T-H motif" evidence="1">
    <location>
        <begin position="33"/>
        <end position="52"/>
    </location>
</feature>
<gene>
    <name evidence="1" type="primary">fabR</name>
    <name type="ordered locus">ESA_03803</name>
</gene>
<organism>
    <name type="scientific">Cronobacter sakazakii (strain ATCC BAA-894)</name>
    <name type="common">Enterobacter sakazakii</name>
    <dbReference type="NCBI Taxonomy" id="290339"/>
    <lineage>
        <taxon>Bacteria</taxon>
        <taxon>Pseudomonadati</taxon>
        <taxon>Pseudomonadota</taxon>
        <taxon>Gammaproteobacteria</taxon>
        <taxon>Enterobacterales</taxon>
        <taxon>Enterobacteriaceae</taxon>
        <taxon>Cronobacter</taxon>
    </lineage>
</organism>
<keyword id="KW-0963">Cytoplasm</keyword>
<keyword id="KW-0238">DNA-binding</keyword>
<keyword id="KW-0275">Fatty acid biosynthesis</keyword>
<keyword id="KW-0276">Fatty acid metabolism</keyword>
<keyword id="KW-0444">Lipid biosynthesis</keyword>
<keyword id="KW-0443">Lipid metabolism</keyword>
<keyword id="KW-1185">Reference proteome</keyword>
<keyword id="KW-0678">Repressor</keyword>
<keyword id="KW-0804">Transcription</keyword>
<keyword id="KW-0805">Transcription regulation</keyword>
<comment type="function">
    <text evidence="1">Represses the transcription of fabB, involved in unsaturated fatty acid (UFA) biosynthesis. By controlling UFA production, FabR directly influences the physical properties of the membrane bilayer.</text>
</comment>
<comment type="subunit">
    <text evidence="1">Homodimer.</text>
</comment>
<comment type="subcellular location">
    <subcellularLocation>
        <location evidence="1">Cytoplasm</location>
    </subcellularLocation>
</comment>
<dbReference type="EMBL" id="CP000783">
    <property type="protein sequence ID" value="ABU78989.1"/>
    <property type="molecule type" value="Genomic_DNA"/>
</dbReference>
<dbReference type="SMR" id="A7ML90"/>
<dbReference type="KEGG" id="esa:ESA_03803"/>
<dbReference type="HOGENOM" id="CLU_081861_0_0_6"/>
<dbReference type="Proteomes" id="UP000000260">
    <property type="component" value="Chromosome"/>
</dbReference>
<dbReference type="GO" id="GO:0005737">
    <property type="term" value="C:cytoplasm"/>
    <property type="evidence" value="ECO:0007669"/>
    <property type="project" value="UniProtKB-SubCell"/>
</dbReference>
<dbReference type="GO" id="GO:0003677">
    <property type="term" value="F:DNA binding"/>
    <property type="evidence" value="ECO:0007669"/>
    <property type="project" value="UniProtKB-KW"/>
</dbReference>
<dbReference type="GO" id="GO:0003700">
    <property type="term" value="F:DNA-binding transcription factor activity"/>
    <property type="evidence" value="ECO:0007669"/>
    <property type="project" value="UniProtKB-UniRule"/>
</dbReference>
<dbReference type="GO" id="GO:0006633">
    <property type="term" value="P:fatty acid biosynthetic process"/>
    <property type="evidence" value="ECO:0007669"/>
    <property type="project" value="UniProtKB-UniRule"/>
</dbReference>
<dbReference type="GO" id="GO:0045717">
    <property type="term" value="P:negative regulation of fatty acid biosynthetic process"/>
    <property type="evidence" value="ECO:0007669"/>
    <property type="project" value="UniProtKB-UniRule"/>
</dbReference>
<dbReference type="FunFam" id="1.10.10.60:FF:000034">
    <property type="entry name" value="HTH-type transcriptional repressor FabR"/>
    <property type="match status" value="1"/>
</dbReference>
<dbReference type="FunFam" id="1.10.357.10:FF:000001">
    <property type="entry name" value="HTH-type transcriptional repressor FabR"/>
    <property type="match status" value="1"/>
</dbReference>
<dbReference type="Gene3D" id="1.10.10.60">
    <property type="entry name" value="Homeodomain-like"/>
    <property type="match status" value="1"/>
</dbReference>
<dbReference type="Gene3D" id="1.10.357.10">
    <property type="entry name" value="Tetracycline Repressor, domain 2"/>
    <property type="match status" value="1"/>
</dbReference>
<dbReference type="HAMAP" id="MF_01190">
    <property type="entry name" value="HTH_type_FabR"/>
    <property type="match status" value="1"/>
</dbReference>
<dbReference type="InterPro" id="IPR054129">
    <property type="entry name" value="DesT_TetR_C"/>
</dbReference>
<dbReference type="InterPro" id="IPR009057">
    <property type="entry name" value="Homeodomain-like_sf"/>
</dbReference>
<dbReference type="InterPro" id="IPR001647">
    <property type="entry name" value="HTH_TetR"/>
</dbReference>
<dbReference type="InterPro" id="IPR050692">
    <property type="entry name" value="HTH_transcr_repressor_FabR"/>
</dbReference>
<dbReference type="InterPro" id="IPR023764">
    <property type="entry name" value="Tscrpt_reg_HTH_FabR"/>
</dbReference>
<dbReference type="NCBIfam" id="NF008402">
    <property type="entry name" value="PRK11202.1"/>
    <property type="match status" value="1"/>
</dbReference>
<dbReference type="PANTHER" id="PTHR47752">
    <property type="entry name" value="HTH-TYPE TRANSCRIPTIONAL REPRESSOR FABR"/>
    <property type="match status" value="1"/>
</dbReference>
<dbReference type="PANTHER" id="PTHR47752:SF1">
    <property type="entry name" value="HTH-TYPE TRANSCRIPTIONAL REPRESSOR FABR"/>
    <property type="match status" value="1"/>
</dbReference>
<dbReference type="Pfam" id="PF21943">
    <property type="entry name" value="TetR_C_46"/>
    <property type="match status" value="1"/>
</dbReference>
<dbReference type="Pfam" id="PF00440">
    <property type="entry name" value="TetR_N"/>
    <property type="match status" value="1"/>
</dbReference>
<dbReference type="SUPFAM" id="SSF46689">
    <property type="entry name" value="Homeodomain-like"/>
    <property type="match status" value="1"/>
</dbReference>
<dbReference type="PROSITE" id="PS50977">
    <property type="entry name" value="HTH_TETR_2"/>
    <property type="match status" value="1"/>
</dbReference>
<name>FABR_CROS8</name>
<evidence type="ECO:0000255" key="1">
    <source>
        <dbReference type="HAMAP-Rule" id="MF_01190"/>
    </source>
</evidence>
<protein>
    <recommendedName>
        <fullName evidence="1">HTH-type transcriptional repressor FabR</fullName>
    </recommendedName>
</protein>